<proteinExistence type="inferred from homology"/>
<name>ZIPA_VIBC1</name>
<comment type="function">
    <text evidence="1">Essential cell division protein that stabilizes the FtsZ protofilaments by cross-linking them and that serves as a cytoplasmic membrane anchor for the Z ring. Also required for the recruitment to the septal ring of downstream cell division proteins.</text>
</comment>
<comment type="subunit">
    <text evidence="1">Interacts with FtsZ via their C-terminal domains.</text>
</comment>
<comment type="subcellular location">
    <subcellularLocation>
        <location evidence="1">Cell inner membrane</location>
        <topology evidence="1">Single-pass type I membrane protein</topology>
    </subcellularLocation>
    <text evidence="1">Localizes to the Z ring in an FtsZ-dependent manner.</text>
</comment>
<comment type="similarity">
    <text evidence="1">Belongs to the ZipA family.</text>
</comment>
<gene>
    <name evidence="1" type="primary">zipA</name>
    <name type="ordered locus">VIBHAR_01311</name>
</gene>
<organism>
    <name type="scientific">Vibrio campbellii (strain ATCC BAA-1116)</name>
    <dbReference type="NCBI Taxonomy" id="2902295"/>
    <lineage>
        <taxon>Bacteria</taxon>
        <taxon>Pseudomonadati</taxon>
        <taxon>Pseudomonadota</taxon>
        <taxon>Gammaproteobacteria</taxon>
        <taxon>Vibrionales</taxon>
        <taxon>Vibrionaceae</taxon>
        <taxon>Vibrio</taxon>
    </lineage>
</organism>
<reference key="1">
    <citation type="submission" date="2007-08" db="EMBL/GenBank/DDBJ databases">
        <authorList>
            <consortium name="The Vibrio harveyi Genome Sequencing Project"/>
            <person name="Bassler B."/>
            <person name="Clifton S.W."/>
            <person name="Fulton L."/>
            <person name="Delehaunty K."/>
            <person name="Fronick C."/>
            <person name="Harrison M."/>
            <person name="Markivic C."/>
            <person name="Fulton R."/>
            <person name="Tin-Wollam A.-M."/>
            <person name="Shah N."/>
            <person name="Pepin K."/>
            <person name="Nash W."/>
            <person name="Thiruvilangam P."/>
            <person name="Bhonagiri V."/>
            <person name="Waters C."/>
            <person name="Tu K.C."/>
            <person name="Irgon J."/>
            <person name="Wilson R.K."/>
        </authorList>
    </citation>
    <scope>NUCLEOTIDE SEQUENCE [LARGE SCALE GENOMIC DNA]</scope>
    <source>
        <strain>ATCC BAA-1116 / BB120</strain>
    </source>
</reference>
<keyword id="KW-0131">Cell cycle</keyword>
<keyword id="KW-0132">Cell division</keyword>
<keyword id="KW-0997">Cell inner membrane</keyword>
<keyword id="KW-1003">Cell membrane</keyword>
<keyword id="KW-0472">Membrane</keyword>
<keyword id="KW-0812">Transmembrane</keyword>
<keyword id="KW-1133">Transmembrane helix</keyword>
<evidence type="ECO:0000255" key="1">
    <source>
        <dbReference type="HAMAP-Rule" id="MF_00509"/>
    </source>
</evidence>
<evidence type="ECO:0000256" key="2">
    <source>
        <dbReference type="SAM" id="MobiDB-lite"/>
    </source>
</evidence>
<feature type="chain" id="PRO_1000015162" description="Cell division protein ZipA">
    <location>
        <begin position="1"/>
        <end position="323"/>
    </location>
</feature>
<feature type="topological domain" description="Periplasmic" evidence="1">
    <location>
        <begin position="1"/>
        <end position="5"/>
    </location>
</feature>
<feature type="transmembrane region" description="Helical" evidence="1">
    <location>
        <begin position="6"/>
        <end position="26"/>
    </location>
</feature>
<feature type="topological domain" description="Cytoplasmic" evidence="1">
    <location>
        <begin position="27"/>
        <end position="323"/>
    </location>
</feature>
<feature type="region of interest" description="Disordered" evidence="2">
    <location>
        <begin position="35"/>
        <end position="92"/>
    </location>
</feature>
<feature type="compositionally biased region" description="Basic and acidic residues" evidence="2">
    <location>
        <begin position="41"/>
        <end position="60"/>
    </location>
</feature>
<feature type="compositionally biased region" description="Basic and acidic residues" evidence="2">
    <location>
        <begin position="68"/>
        <end position="78"/>
    </location>
</feature>
<dbReference type="EMBL" id="CP000789">
    <property type="protein sequence ID" value="ABU70288.1"/>
    <property type="molecule type" value="Genomic_DNA"/>
</dbReference>
<dbReference type="RefSeq" id="WP_012127237.1">
    <property type="nucleotide sequence ID" value="NC_009783.1"/>
</dbReference>
<dbReference type="SMR" id="A7MT68"/>
<dbReference type="KEGG" id="vha:VIBHAR_01311"/>
<dbReference type="PATRIC" id="fig|338187.25.peg.1338"/>
<dbReference type="Proteomes" id="UP000008152">
    <property type="component" value="Chromosome I"/>
</dbReference>
<dbReference type="GO" id="GO:0032153">
    <property type="term" value="C:cell division site"/>
    <property type="evidence" value="ECO:0007669"/>
    <property type="project" value="UniProtKB-UniRule"/>
</dbReference>
<dbReference type="GO" id="GO:0005886">
    <property type="term" value="C:plasma membrane"/>
    <property type="evidence" value="ECO:0007669"/>
    <property type="project" value="UniProtKB-SubCell"/>
</dbReference>
<dbReference type="GO" id="GO:0000917">
    <property type="term" value="P:division septum assembly"/>
    <property type="evidence" value="ECO:0007669"/>
    <property type="project" value="TreeGrafter"/>
</dbReference>
<dbReference type="GO" id="GO:0043093">
    <property type="term" value="P:FtsZ-dependent cytokinesis"/>
    <property type="evidence" value="ECO:0007669"/>
    <property type="project" value="UniProtKB-UniRule"/>
</dbReference>
<dbReference type="Gene3D" id="3.30.1400.10">
    <property type="entry name" value="ZipA, C-terminal FtsZ-binding domain"/>
    <property type="match status" value="1"/>
</dbReference>
<dbReference type="HAMAP" id="MF_00509">
    <property type="entry name" value="ZipA"/>
    <property type="match status" value="1"/>
</dbReference>
<dbReference type="InterPro" id="IPR011919">
    <property type="entry name" value="Cell_div_ZipA"/>
</dbReference>
<dbReference type="InterPro" id="IPR007449">
    <property type="entry name" value="ZipA_FtsZ-bd_C"/>
</dbReference>
<dbReference type="InterPro" id="IPR036765">
    <property type="entry name" value="ZipA_FtsZ-bd_C_sf"/>
</dbReference>
<dbReference type="NCBIfam" id="TIGR02205">
    <property type="entry name" value="septum_zipA"/>
    <property type="match status" value="1"/>
</dbReference>
<dbReference type="PANTHER" id="PTHR38685">
    <property type="entry name" value="CELL DIVISION PROTEIN ZIPA"/>
    <property type="match status" value="1"/>
</dbReference>
<dbReference type="PANTHER" id="PTHR38685:SF1">
    <property type="entry name" value="CELL DIVISION PROTEIN ZIPA"/>
    <property type="match status" value="1"/>
</dbReference>
<dbReference type="Pfam" id="PF04354">
    <property type="entry name" value="ZipA_C"/>
    <property type="match status" value="1"/>
</dbReference>
<dbReference type="SMART" id="SM00771">
    <property type="entry name" value="ZipA_C"/>
    <property type="match status" value="1"/>
</dbReference>
<dbReference type="SUPFAM" id="SSF64383">
    <property type="entry name" value="Cell-division protein ZipA, C-terminal domain"/>
    <property type="match status" value="1"/>
</dbReference>
<accession>A7MT68</accession>
<sequence>MQELRFVLIVVGALAIAALLFHGLWTSKKEGKAKFGNKPLGKLDVDQEDKDTPGQERDFAPDPEDDFEIIRKDRKEPDFGMENSFDNKFSSDPLIDDVLEAKEDKEQREEQEIPAFVATKTDDEQVEPVLQEPAKAFAEKEEAAEVVEETLQPVFEAPLAAQAPEVEVAPVVVDPVVEEPKPEPEMQVIVLNVHCAGDEPFVGTQLFDSMQQNGLIYGEMNIFHRHVDLSGNGKVLFSVANMMQPGTLEHGDPAEFSTKGISFFMTLPCYGEADQNFNLMLRIAQQIADDMGGNVLDDQRNLMTPDRLASYRRQIVEFNAANA</sequence>
<protein>
    <recommendedName>
        <fullName evidence="1">Cell division protein ZipA</fullName>
    </recommendedName>
</protein>